<reference key="1">
    <citation type="journal article" date="2008" name="J. Bacteriol.">
        <title>The complete genome sequence of Escherichia coli DH10B: insights into the biology of a laboratory workhorse.</title>
        <authorList>
            <person name="Durfee T."/>
            <person name="Nelson R."/>
            <person name="Baldwin S."/>
            <person name="Plunkett G. III"/>
            <person name="Burland V."/>
            <person name="Mau B."/>
            <person name="Petrosino J.F."/>
            <person name="Qin X."/>
            <person name="Muzny D.M."/>
            <person name="Ayele M."/>
            <person name="Gibbs R.A."/>
            <person name="Csorgo B."/>
            <person name="Posfai G."/>
            <person name="Weinstock G.M."/>
            <person name="Blattner F.R."/>
        </authorList>
    </citation>
    <scope>NUCLEOTIDE SEQUENCE [LARGE SCALE GENOMIC DNA]</scope>
    <source>
        <strain>K12 / DH10B</strain>
    </source>
</reference>
<name>RS14_ECODH</name>
<gene>
    <name evidence="1" type="primary">rpsN</name>
    <name type="ordered locus">ECDH10B_3482</name>
</gene>
<sequence length="101" mass="11580">MAKQSMKAREVKRVALADKYFAKRAELKAIISDVNASDEDRWNAVLKLQTLPRDSSPSRQRNRCRQTGRPHGFLRKFGLSRIKVREAAMRGEIPGLKKASW</sequence>
<keyword id="KW-0687">Ribonucleoprotein</keyword>
<keyword id="KW-0689">Ribosomal protein</keyword>
<keyword id="KW-0694">RNA-binding</keyword>
<keyword id="KW-0699">rRNA-binding</keyword>
<evidence type="ECO:0000255" key="1">
    <source>
        <dbReference type="HAMAP-Rule" id="MF_00537"/>
    </source>
</evidence>
<evidence type="ECO:0000305" key="2"/>
<proteinExistence type="inferred from homology"/>
<comment type="function">
    <text evidence="1">Binds 16S rRNA, required for the assembly of 30S particles and may also be responsible for determining the conformation of the 16S rRNA at the A site.</text>
</comment>
<comment type="subunit">
    <text evidence="1">Part of the 30S ribosomal subunit. Contacts proteins S3 and S10.</text>
</comment>
<comment type="similarity">
    <text evidence="1">Belongs to the universal ribosomal protein uS14 family.</text>
</comment>
<organism>
    <name type="scientific">Escherichia coli (strain K12 / DH10B)</name>
    <dbReference type="NCBI Taxonomy" id="316385"/>
    <lineage>
        <taxon>Bacteria</taxon>
        <taxon>Pseudomonadati</taxon>
        <taxon>Pseudomonadota</taxon>
        <taxon>Gammaproteobacteria</taxon>
        <taxon>Enterobacterales</taxon>
        <taxon>Enterobacteriaceae</taxon>
        <taxon>Escherichia</taxon>
    </lineage>
</organism>
<protein>
    <recommendedName>
        <fullName evidence="1">Small ribosomal subunit protein uS14</fullName>
    </recommendedName>
    <alternativeName>
        <fullName evidence="2">30S ribosomal protein S14</fullName>
    </alternativeName>
</protein>
<accession>B1X6F9</accession>
<dbReference type="EMBL" id="CP000948">
    <property type="protein sequence ID" value="ACB04369.1"/>
    <property type="molecule type" value="Genomic_DNA"/>
</dbReference>
<dbReference type="RefSeq" id="WP_001118930.1">
    <property type="nucleotide sequence ID" value="NC_010473.1"/>
</dbReference>
<dbReference type="SMR" id="B1X6F9"/>
<dbReference type="GeneID" id="93778680"/>
<dbReference type="KEGG" id="ecd:ECDH10B_3482"/>
<dbReference type="HOGENOM" id="CLU_139869_0_1_6"/>
<dbReference type="GO" id="GO:0005737">
    <property type="term" value="C:cytoplasm"/>
    <property type="evidence" value="ECO:0007669"/>
    <property type="project" value="UniProtKB-ARBA"/>
</dbReference>
<dbReference type="GO" id="GO:0015935">
    <property type="term" value="C:small ribosomal subunit"/>
    <property type="evidence" value="ECO:0007669"/>
    <property type="project" value="TreeGrafter"/>
</dbReference>
<dbReference type="GO" id="GO:0019843">
    <property type="term" value="F:rRNA binding"/>
    <property type="evidence" value="ECO:0007669"/>
    <property type="project" value="UniProtKB-UniRule"/>
</dbReference>
<dbReference type="GO" id="GO:0003735">
    <property type="term" value="F:structural constituent of ribosome"/>
    <property type="evidence" value="ECO:0007669"/>
    <property type="project" value="InterPro"/>
</dbReference>
<dbReference type="GO" id="GO:0006412">
    <property type="term" value="P:translation"/>
    <property type="evidence" value="ECO:0007669"/>
    <property type="project" value="UniProtKB-UniRule"/>
</dbReference>
<dbReference type="FunFam" id="1.10.287.1480:FF:000001">
    <property type="entry name" value="30S ribosomal protein S14"/>
    <property type="match status" value="1"/>
</dbReference>
<dbReference type="Gene3D" id="1.10.287.1480">
    <property type="match status" value="1"/>
</dbReference>
<dbReference type="HAMAP" id="MF_00537">
    <property type="entry name" value="Ribosomal_uS14_1"/>
    <property type="match status" value="1"/>
</dbReference>
<dbReference type="InterPro" id="IPR001209">
    <property type="entry name" value="Ribosomal_uS14"/>
</dbReference>
<dbReference type="InterPro" id="IPR023036">
    <property type="entry name" value="Ribosomal_uS14_bac/plastid"/>
</dbReference>
<dbReference type="InterPro" id="IPR018271">
    <property type="entry name" value="Ribosomal_uS14_CS"/>
</dbReference>
<dbReference type="NCBIfam" id="NF006477">
    <property type="entry name" value="PRK08881.1"/>
    <property type="match status" value="1"/>
</dbReference>
<dbReference type="PANTHER" id="PTHR19836">
    <property type="entry name" value="30S RIBOSOMAL PROTEIN S14"/>
    <property type="match status" value="1"/>
</dbReference>
<dbReference type="PANTHER" id="PTHR19836:SF19">
    <property type="entry name" value="SMALL RIBOSOMAL SUBUNIT PROTEIN US14M"/>
    <property type="match status" value="1"/>
</dbReference>
<dbReference type="Pfam" id="PF00253">
    <property type="entry name" value="Ribosomal_S14"/>
    <property type="match status" value="1"/>
</dbReference>
<dbReference type="SUPFAM" id="SSF57716">
    <property type="entry name" value="Glucocorticoid receptor-like (DNA-binding domain)"/>
    <property type="match status" value="1"/>
</dbReference>
<dbReference type="PROSITE" id="PS00527">
    <property type="entry name" value="RIBOSOMAL_S14"/>
    <property type="match status" value="1"/>
</dbReference>
<feature type="chain" id="PRO_1000128386" description="Small ribosomal subunit protein uS14">
    <location>
        <begin position="1"/>
        <end position="101"/>
    </location>
</feature>